<geneLocation type="chloroplast"/>
<name>RR18_CYACA</name>
<dbReference type="EMBL" id="AF022186">
    <property type="protein sequence ID" value="AAF13018.1"/>
    <property type="molecule type" value="Genomic_DNA"/>
</dbReference>
<dbReference type="RefSeq" id="NP_045027.1">
    <property type="nucleotide sequence ID" value="NC_001840.1"/>
</dbReference>
<dbReference type="SMR" id="Q9TM39"/>
<dbReference type="GeneID" id="800175"/>
<dbReference type="GO" id="GO:0009507">
    <property type="term" value="C:chloroplast"/>
    <property type="evidence" value="ECO:0007669"/>
    <property type="project" value="UniProtKB-SubCell"/>
</dbReference>
<dbReference type="GO" id="GO:1990904">
    <property type="term" value="C:ribonucleoprotein complex"/>
    <property type="evidence" value="ECO:0007669"/>
    <property type="project" value="UniProtKB-KW"/>
</dbReference>
<dbReference type="GO" id="GO:0005840">
    <property type="term" value="C:ribosome"/>
    <property type="evidence" value="ECO:0007669"/>
    <property type="project" value="UniProtKB-KW"/>
</dbReference>
<dbReference type="GO" id="GO:0070181">
    <property type="term" value="F:small ribosomal subunit rRNA binding"/>
    <property type="evidence" value="ECO:0007669"/>
    <property type="project" value="TreeGrafter"/>
</dbReference>
<dbReference type="GO" id="GO:0003735">
    <property type="term" value="F:structural constituent of ribosome"/>
    <property type="evidence" value="ECO:0007669"/>
    <property type="project" value="InterPro"/>
</dbReference>
<dbReference type="GO" id="GO:0006412">
    <property type="term" value="P:translation"/>
    <property type="evidence" value="ECO:0007669"/>
    <property type="project" value="UniProtKB-UniRule"/>
</dbReference>
<dbReference type="Gene3D" id="4.10.640.10">
    <property type="entry name" value="Ribosomal protein S18"/>
    <property type="match status" value="1"/>
</dbReference>
<dbReference type="HAMAP" id="MF_00270">
    <property type="entry name" value="Ribosomal_bS18"/>
    <property type="match status" value="1"/>
</dbReference>
<dbReference type="InterPro" id="IPR001648">
    <property type="entry name" value="Ribosomal_bS18"/>
</dbReference>
<dbReference type="InterPro" id="IPR018275">
    <property type="entry name" value="Ribosomal_bS18_CS"/>
</dbReference>
<dbReference type="InterPro" id="IPR036870">
    <property type="entry name" value="Ribosomal_bS18_sf"/>
</dbReference>
<dbReference type="NCBIfam" id="TIGR00165">
    <property type="entry name" value="S18"/>
    <property type="match status" value="1"/>
</dbReference>
<dbReference type="PANTHER" id="PTHR13479">
    <property type="entry name" value="30S RIBOSOMAL PROTEIN S18"/>
    <property type="match status" value="1"/>
</dbReference>
<dbReference type="PANTHER" id="PTHR13479:SF40">
    <property type="entry name" value="SMALL RIBOSOMAL SUBUNIT PROTEIN BS18M"/>
    <property type="match status" value="1"/>
</dbReference>
<dbReference type="Pfam" id="PF01084">
    <property type="entry name" value="Ribosomal_S18"/>
    <property type="match status" value="1"/>
</dbReference>
<dbReference type="PRINTS" id="PR00974">
    <property type="entry name" value="RIBOSOMALS18"/>
</dbReference>
<dbReference type="SUPFAM" id="SSF46911">
    <property type="entry name" value="Ribosomal protein S18"/>
    <property type="match status" value="1"/>
</dbReference>
<dbReference type="PROSITE" id="PS00057">
    <property type="entry name" value="RIBOSOMAL_S18"/>
    <property type="match status" value="1"/>
</dbReference>
<sequence>MNKKIKIPKDSKAINYKTTDLIREFISDRGKIIPQRITKSTRKKHKLIEKAIKQARLIGLMPFKQKNW</sequence>
<keyword id="KW-0150">Chloroplast</keyword>
<keyword id="KW-0934">Plastid</keyword>
<keyword id="KW-0687">Ribonucleoprotein</keyword>
<keyword id="KW-0689">Ribosomal protein</keyword>
<keyword id="KW-0694">RNA-binding</keyword>
<keyword id="KW-0699">rRNA-binding</keyword>
<protein>
    <recommendedName>
        <fullName evidence="1">Small ribosomal subunit protein bS18c</fullName>
    </recommendedName>
    <alternativeName>
        <fullName>30S ribosomal protein S18, chloroplastic</fullName>
    </alternativeName>
</protein>
<proteinExistence type="inferred from homology"/>
<organism>
    <name type="scientific">Cyanidium caldarium</name>
    <name type="common">Red alga</name>
    <dbReference type="NCBI Taxonomy" id="2771"/>
    <lineage>
        <taxon>Eukaryota</taxon>
        <taxon>Rhodophyta</taxon>
        <taxon>Bangiophyceae</taxon>
        <taxon>Cyanidiales</taxon>
        <taxon>Cyanidiaceae</taxon>
        <taxon>Cyanidium</taxon>
    </lineage>
</organism>
<comment type="subunit">
    <text>Part of the 30S ribosomal subunit.</text>
</comment>
<comment type="subcellular location">
    <subcellularLocation>
        <location>Plastid</location>
        <location>Chloroplast</location>
    </subcellularLocation>
</comment>
<comment type="similarity">
    <text evidence="1">Belongs to the bacterial ribosomal protein bS18 family.</text>
</comment>
<gene>
    <name type="primary">rps18</name>
</gene>
<accession>Q9TM39</accession>
<evidence type="ECO:0000305" key="1"/>
<feature type="chain" id="PRO_0000111282" description="Small ribosomal subunit protein bS18c">
    <location>
        <begin position="1"/>
        <end position="68"/>
    </location>
</feature>
<reference key="1">
    <citation type="journal article" date="2000" name="J. Mol. Evol.">
        <title>The structure and gene repertoire of an ancient red algal plastid genome.</title>
        <authorList>
            <person name="Gloeckner G."/>
            <person name="Rosenthal A."/>
            <person name="Valentin K.-U."/>
        </authorList>
    </citation>
    <scope>NUCLEOTIDE SEQUENCE [LARGE SCALE GENOMIC DNA]</scope>
    <source>
        <strain>RK-1</strain>
    </source>
</reference>